<reference key="1">
    <citation type="submission" date="2008-01" db="EMBL/GenBank/DDBJ databases">
        <title>Complete sequence of Thermoanaerobacter pseudethanolicus 39E.</title>
        <authorList>
            <person name="Copeland A."/>
            <person name="Lucas S."/>
            <person name="Lapidus A."/>
            <person name="Barry K."/>
            <person name="Glavina del Rio T."/>
            <person name="Dalin E."/>
            <person name="Tice H."/>
            <person name="Pitluck S."/>
            <person name="Bruce D."/>
            <person name="Goodwin L."/>
            <person name="Saunders E."/>
            <person name="Brettin T."/>
            <person name="Detter J.C."/>
            <person name="Han C."/>
            <person name="Schmutz J."/>
            <person name="Larimer F."/>
            <person name="Land M."/>
            <person name="Hauser L."/>
            <person name="Kyrpides N."/>
            <person name="Lykidis A."/>
            <person name="Hemme C."/>
            <person name="Fields M.W."/>
            <person name="He Z."/>
            <person name="Zhou J."/>
            <person name="Richardson P."/>
        </authorList>
    </citation>
    <scope>NUCLEOTIDE SEQUENCE [LARGE SCALE GENOMIC DNA]</scope>
    <source>
        <strain>ATCC 33223 / DSM 2355 / 39E</strain>
    </source>
</reference>
<name>AROC_THEP3</name>
<protein>
    <recommendedName>
        <fullName evidence="1">Chorismate synthase</fullName>
        <shortName evidence="1">CS</shortName>
        <ecNumber evidence="1">4.2.3.5</ecNumber>
    </recommendedName>
    <alternativeName>
        <fullName evidence="1">5-enolpyruvylshikimate-3-phosphate phospholyase</fullName>
    </alternativeName>
</protein>
<keyword id="KW-0028">Amino-acid biosynthesis</keyword>
<keyword id="KW-0057">Aromatic amino acid biosynthesis</keyword>
<keyword id="KW-0274">FAD</keyword>
<keyword id="KW-0285">Flavoprotein</keyword>
<keyword id="KW-0288">FMN</keyword>
<keyword id="KW-0456">Lyase</keyword>
<keyword id="KW-0521">NADP</keyword>
<keyword id="KW-1185">Reference proteome</keyword>
<sequence>MRYITAGESHGEALIAVIEGLPSNLLIDEEFINKELKRRQGGYGRGGRMAIEEDKVHVLSGIRNGKTIGSPLTLEIINKDYENWKNKKTPEVTRPRPGHADLAGAIKYNQRDLRNILERSSARETAARVAVGSVAKLLLKELDIYVKSKVLEIGGVKAEEKWRRTIDEAKSKGDTLGGIIEIVIEGVPVGLGSHVQWDRKLDALLAYHVMSVQAIKAVEIGLGFEAARKPGSLVHDEIYYDEERGFYRKTNNAGGIEGGISNGSPIVIKAAMKPIPTLLKPLTSIDINTKEEVKAAYERSDVTAVEAAACVLEAVCAWVIADECLKKFGGDSIEELKKNYDAYLVYVKNF</sequence>
<feature type="chain" id="PRO_1000115411" description="Chorismate synthase">
    <location>
        <begin position="1"/>
        <end position="350"/>
    </location>
</feature>
<feature type="binding site" evidence="1">
    <location>
        <position position="39"/>
    </location>
    <ligand>
        <name>NADP(+)</name>
        <dbReference type="ChEBI" id="CHEBI:58349"/>
    </ligand>
</feature>
<feature type="binding site" evidence="1">
    <location>
        <position position="45"/>
    </location>
    <ligand>
        <name>NADP(+)</name>
        <dbReference type="ChEBI" id="CHEBI:58349"/>
    </ligand>
</feature>
<feature type="binding site" evidence="1">
    <location>
        <begin position="119"/>
        <end position="121"/>
    </location>
    <ligand>
        <name>FMN</name>
        <dbReference type="ChEBI" id="CHEBI:58210"/>
    </ligand>
</feature>
<feature type="binding site" evidence="1">
    <location>
        <begin position="213"/>
        <end position="214"/>
    </location>
    <ligand>
        <name>FMN</name>
        <dbReference type="ChEBI" id="CHEBI:58210"/>
    </ligand>
</feature>
<feature type="binding site" evidence="1">
    <location>
        <position position="258"/>
    </location>
    <ligand>
        <name>FMN</name>
        <dbReference type="ChEBI" id="CHEBI:58210"/>
    </ligand>
</feature>
<feature type="binding site" evidence="1">
    <location>
        <begin position="273"/>
        <end position="277"/>
    </location>
    <ligand>
        <name>FMN</name>
        <dbReference type="ChEBI" id="CHEBI:58210"/>
    </ligand>
</feature>
<feature type="binding site" evidence="1">
    <location>
        <position position="299"/>
    </location>
    <ligand>
        <name>FMN</name>
        <dbReference type="ChEBI" id="CHEBI:58210"/>
    </ligand>
</feature>
<proteinExistence type="inferred from homology"/>
<organism>
    <name type="scientific">Thermoanaerobacter pseudethanolicus (strain ATCC 33223 / 39E)</name>
    <name type="common">Clostridium thermohydrosulfuricum</name>
    <dbReference type="NCBI Taxonomy" id="340099"/>
    <lineage>
        <taxon>Bacteria</taxon>
        <taxon>Bacillati</taxon>
        <taxon>Bacillota</taxon>
        <taxon>Clostridia</taxon>
        <taxon>Thermoanaerobacterales</taxon>
        <taxon>Thermoanaerobacteraceae</taxon>
        <taxon>Thermoanaerobacter</taxon>
    </lineage>
</organism>
<accession>B0K8B2</accession>
<dbReference type="EC" id="4.2.3.5" evidence="1"/>
<dbReference type="EMBL" id="CP000924">
    <property type="protein sequence ID" value="ABY94425.1"/>
    <property type="molecule type" value="Genomic_DNA"/>
</dbReference>
<dbReference type="RefSeq" id="WP_012269167.1">
    <property type="nucleotide sequence ID" value="NC_010321.1"/>
</dbReference>
<dbReference type="SMR" id="B0K8B2"/>
<dbReference type="STRING" id="340099.Teth39_0766"/>
<dbReference type="KEGG" id="tpd:Teth39_0766"/>
<dbReference type="eggNOG" id="COG0082">
    <property type="taxonomic scope" value="Bacteria"/>
</dbReference>
<dbReference type="HOGENOM" id="CLU_034547_2_0_9"/>
<dbReference type="UniPathway" id="UPA00053">
    <property type="reaction ID" value="UER00090"/>
</dbReference>
<dbReference type="Proteomes" id="UP000002156">
    <property type="component" value="Chromosome"/>
</dbReference>
<dbReference type="GO" id="GO:0005829">
    <property type="term" value="C:cytosol"/>
    <property type="evidence" value="ECO:0007669"/>
    <property type="project" value="TreeGrafter"/>
</dbReference>
<dbReference type="GO" id="GO:0004107">
    <property type="term" value="F:chorismate synthase activity"/>
    <property type="evidence" value="ECO:0007669"/>
    <property type="project" value="UniProtKB-UniRule"/>
</dbReference>
<dbReference type="GO" id="GO:0010181">
    <property type="term" value="F:FMN binding"/>
    <property type="evidence" value="ECO:0007669"/>
    <property type="project" value="TreeGrafter"/>
</dbReference>
<dbReference type="GO" id="GO:0008652">
    <property type="term" value="P:amino acid biosynthetic process"/>
    <property type="evidence" value="ECO:0007669"/>
    <property type="project" value="UniProtKB-KW"/>
</dbReference>
<dbReference type="GO" id="GO:0009073">
    <property type="term" value="P:aromatic amino acid family biosynthetic process"/>
    <property type="evidence" value="ECO:0007669"/>
    <property type="project" value="UniProtKB-KW"/>
</dbReference>
<dbReference type="GO" id="GO:0009423">
    <property type="term" value="P:chorismate biosynthetic process"/>
    <property type="evidence" value="ECO:0007669"/>
    <property type="project" value="UniProtKB-UniRule"/>
</dbReference>
<dbReference type="CDD" id="cd07304">
    <property type="entry name" value="Chorismate_synthase"/>
    <property type="match status" value="1"/>
</dbReference>
<dbReference type="Gene3D" id="3.60.150.10">
    <property type="entry name" value="Chorismate synthase AroC"/>
    <property type="match status" value="2"/>
</dbReference>
<dbReference type="HAMAP" id="MF_00300">
    <property type="entry name" value="Chorismate_synth"/>
    <property type="match status" value="1"/>
</dbReference>
<dbReference type="InterPro" id="IPR000453">
    <property type="entry name" value="Chorismate_synth"/>
</dbReference>
<dbReference type="InterPro" id="IPR035904">
    <property type="entry name" value="Chorismate_synth_AroC_sf"/>
</dbReference>
<dbReference type="InterPro" id="IPR020541">
    <property type="entry name" value="Chorismate_synthase_CS"/>
</dbReference>
<dbReference type="PANTHER" id="PTHR21085">
    <property type="entry name" value="CHORISMATE SYNTHASE"/>
    <property type="match status" value="1"/>
</dbReference>
<dbReference type="PANTHER" id="PTHR21085:SF0">
    <property type="entry name" value="CHORISMATE SYNTHASE"/>
    <property type="match status" value="1"/>
</dbReference>
<dbReference type="Pfam" id="PF01264">
    <property type="entry name" value="Chorismate_synt"/>
    <property type="match status" value="1"/>
</dbReference>
<dbReference type="PIRSF" id="PIRSF001456">
    <property type="entry name" value="Chorismate_synth"/>
    <property type="match status" value="1"/>
</dbReference>
<dbReference type="SUPFAM" id="SSF103263">
    <property type="entry name" value="Chorismate synthase, AroC"/>
    <property type="match status" value="1"/>
</dbReference>
<dbReference type="PROSITE" id="PS00787">
    <property type="entry name" value="CHORISMATE_SYNTHASE_1"/>
    <property type="match status" value="1"/>
</dbReference>
<dbReference type="PROSITE" id="PS00788">
    <property type="entry name" value="CHORISMATE_SYNTHASE_2"/>
    <property type="match status" value="1"/>
</dbReference>
<gene>
    <name evidence="1" type="primary">aroC</name>
    <name type="ordered locus">Teth39_0766</name>
</gene>
<comment type="function">
    <text evidence="1">Catalyzes the anti-1,4-elimination of the C-3 phosphate and the C-6 proR hydrogen from 5-enolpyruvylshikimate-3-phosphate (EPSP) to yield chorismate, which is the branch point compound that serves as the starting substrate for the three terminal pathways of aromatic amino acid biosynthesis. This reaction introduces a second double bond into the aromatic ring system.</text>
</comment>
<comment type="catalytic activity">
    <reaction evidence="1">
        <text>5-O-(1-carboxyvinyl)-3-phosphoshikimate = chorismate + phosphate</text>
        <dbReference type="Rhea" id="RHEA:21020"/>
        <dbReference type="ChEBI" id="CHEBI:29748"/>
        <dbReference type="ChEBI" id="CHEBI:43474"/>
        <dbReference type="ChEBI" id="CHEBI:57701"/>
        <dbReference type="EC" id="4.2.3.5"/>
    </reaction>
</comment>
<comment type="cofactor">
    <cofactor evidence="1">
        <name>FMNH2</name>
        <dbReference type="ChEBI" id="CHEBI:57618"/>
    </cofactor>
    <text evidence="1">Reduced FMN (FMNH(2)).</text>
</comment>
<comment type="pathway">
    <text evidence="1">Metabolic intermediate biosynthesis; chorismate biosynthesis; chorismate from D-erythrose 4-phosphate and phosphoenolpyruvate: step 7/7.</text>
</comment>
<comment type="subunit">
    <text evidence="1">Homotetramer.</text>
</comment>
<comment type="similarity">
    <text evidence="1">Belongs to the chorismate synthase family.</text>
</comment>
<evidence type="ECO:0000255" key="1">
    <source>
        <dbReference type="HAMAP-Rule" id="MF_00300"/>
    </source>
</evidence>